<sequence length="255" mass="27899">MGNSCYNIVATLLLVLNFERTRSLQDPCSNCPAGTFCDNNRNQICSPCPPNSFSSAGGQRTCDICRQCKGVFRTRKECSSTSNAECDCTPGFHCLGAGCSMCEQDCKQGQELTKKGCKDCCFGTFNDQKRGICRPWTNCSLDGKSVLVNGTKERDVVCGPSPADLSPGASSVTPPAPAREPGHSPQIISFFLALTSTALLFLLFFLTLRFSVVKRGRKKLLYIFKQPFMRPVQTTQEEDGCSCRFPEEEEGGCEL</sequence>
<dbReference type="EMBL" id="U03397">
    <property type="protein sequence ID" value="AAA53133.1"/>
    <property type="molecule type" value="mRNA"/>
</dbReference>
<dbReference type="EMBL" id="L12964">
    <property type="protein sequence ID" value="AAA62478.2"/>
    <property type="molecule type" value="mRNA"/>
</dbReference>
<dbReference type="EMBL" id="AY438976">
    <property type="protein sequence ID" value="AAR05440.1"/>
    <property type="molecule type" value="Genomic_DNA"/>
</dbReference>
<dbReference type="EMBL" id="AL009183">
    <property type="status" value="NOT_ANNOTATED_CDS"/>
    <property type="molecule type" value="Genomic_DNA"/>
</dbReference>
<dbReference type="EMBL" id="BC006196">
    <property type="protein sequence ID" value="AAH06196.1"/>
    <property type="molecule type" value="mRNA"/>
</dbReference>
<dbReference type="CCDS" id="CCDS92.1"/>
<dbReference type="PIR" id="I38426">
    <property type="entry name" value="I38426"/>
</dbReference>
<dbReference type="RefSeq" id="NP_001552.2">
    <property type="nucleotide sequence ID" value="NM_001561.5"/>
</dbReference>
<dbReference type="RefSeq" id="XP_011539688.1">
    <property type="nucleotide sequence ID" value="XM_011541386.2"/>
</dbReference>
<dbReference type="PDB" id="6A3V">
    <property type="method" value="X-ray"/>
    <property type="resolution" value="3.39 A"/>
    <property type="chains" value="B/D/F/H/J/L/N/P/R/T/V/X=24-180"/>
</dbReference>
<dbReference type="PDB" id="6A3W">
    <property type="method" value="X-ray"/>
    <property type="resolution" value="2.00 A"/>
    <property type="chains" value="C/F/I/L=24-180"/>
</dbReference>
<dbReference type="PDB" id="6BWV">
    <property type="method" value="X-ray"/>
    <property type="resolution" value="2.40 A"/>
    <property type="chains" value="D/E=24-160"/>
</dbReference>
<dbReference type="PDB" id="6CPR">
    <property type="method" value="X-ray"/>
    <property type="resolution" value="2.70 A"/>
    <property type="chains" value="D/E/F=23-160"/>
</dbReference>
<dbReference type="PDB" id="6CU0">
    <property type="method" value="X-ray"/>
    <property type="resolution" value="3.20 A"/>
    <property type="chains" value="G/H/I/J/K/L=23-160"/>
</dbReference>
<dbReference type="PDB" id="6MGP">
    <property type="method" value="X-ray"/>
    <property type="resolution" value="2.13 A"/>
    <property type="chains" value="X/Y/Z=25-162"/>
</dbReference>
<dbReference type="PDB" id="6MHR">
    <property type="method" value="X-ray"/>
    <property type="resolution" value="2.80 A"/>
    <property type="chains" value="C/F=25-162"/>
</dbReference>
<dbReference type="PDB" id="6MI2">
    <property type="method" value="X-ray"/>
    <property type="resolution" value="2.72 A"/>
    <property type="chains" value="C/F=25-162"/>
</dbReference>
<dbReference type="PDB" id="6Y8K">
    <property type="method" value="X-ray"/>
    <property type="resolution" value="2.01 A"/>
    <property type="chains" value="AAA=24-160"/>
</dbReference>
<dbReference type="PDB" id="7D4B">
    <property type="method" value="X-ray"/>
    <property type="resolution" value="3.14 A"/>
    <property type="chains" value="A=25-162"/>
</dbReference>
<dbReference type="PDB" id="7YXU">
    <property type="method" value="X-ray"/>
    <property type="resolution" value="2.31 A"/>
    <property type="chains" value="A=24-160"/>
</dbReference>
<dbReference type="PDB" id="8GYE">
    <property type="method" value="X-ray"/>
    <property type="resolution" value="2.30 A"/>
    <property type="chains" value="A/D=24-186"/>
</dbReference>
<dbReference type="PDB" id="8OZ3">
    <property type="method" value="X-ray"/>
    <property type="resolution" value="3.10 A"/>
    <property type="chains" value="C/D=24-160"/>
</dbReference>
<dbReference type="PDBsum" id="6A3V"/>
<dbReference type="PDBsum" id="6A3W"/>
<dbReference type="PDBsum" id="6BWV"/>
<dbReference type="PDBsum" id="6CPR"/>
<dbReference type="PDBsum" id="6CU0"/>
<dbReference type="PDBsum" id="6MGP"/>
<dbReference type="PDBsum" id="6MHR"/>
<dbReference type="PDBsum" id="6MI2"/>
<dbReference type="PDBsum" id="6Y8K"/>
<dbReference type="PDBsum" id="7D4B"/>
<dbReference type="PDBsum" id="7YXU"/>
<dbReference type="PDBsum" id="8GYE"/>
<dbReference type="PDBsum" id="8OZ3"/>
<dbReference type="SMR" id="Q07011"/>
<dbReference type="BioGRID" id="109817">
    <property type="interactions" value="36"/>
</dbReference>
<dbReference type="DIP" id="DIP-3021N"/>
<dbReference type="ELM" id="Q07011"/>
<dbReference type="FunCoup" id="Q07011">
    <property type="interactions" value="813"/>
</dbReference>
<dbReference type="IntAct" id="Q07011">
    <property type="interactions" value="20"/>
</dbReference>
<dbReference type="STRING" id="9606.ENSP00000478699"/>
<dbReference type="BindingDB" id="Q07011"/>
<dbReference type="ChEMBL" id="CHEMBL3712857"/>
<dbReference type="DrugBank" id="DB12077">
    <property type="generic name" value="Urelumab"/>
</dbReference>
<dbReference type="GuidetoPHARMACOLOGY" id="1878"/>
<dbReference type="TCDB" id="9.B.87.4.2">
    <property type="family name" value="the selenoprotein p receptor (selp-receptor) family"/>
</dbReference>
<dbReference type="GlyCosmos" id="Q07011">
    <property type="glycosylation" value="2 sites, No reported glycans"/>
</dbReference>
<dbReference type="GlyGen" id="Q07011">
    <property type="glycosylation" value="2 sites, 1 N-linked glycan (1 site)"/>
</dbReference>
<dbReference type="iPTMnet" id="Q07011"/>
<dbReference type="PhosphoSitePlus" id="Q07011"/>
<dbReference type="BioMuta" id="TNFRSF9"/>
<dbReference type="DMDM" id="728738"/>
<dbReference type="CPTAC" id="CPTAC-5974"/>
<dbReference type="MassIVE" id="Q07011"/>
<dbReference type="PaxDb" id="9606-ENSP00000478699"/>
<dbReference type="PeptideAtlas" id="Q07011"/>
<dbReference type="ProteomicsDB" id="58498"/>
<dbReference type="ABCD" id="Q07011">
    <property type="antibodies" value="3 sequenced antibodies"/>
</dbReference>
<dbReference type="Antibodypedia" id="3718">
    <property type="antibodies" value="1515 antibodies from 47 providers"/>
</dbReference>
<dbReference type="CPTC" id="Q07011">
    <property type="antibodies" value="6 antibodies"/>
</dbReference>
<dbReference type="DNASU" id="3604"/>
<dbReference type="Ensembl" id="ENST00000377507.8">
    <property type="protein sequence ID" value="ENSP00000366729.3"/>
    <property type="gene ID" value="ENSG00000049249.10"/>
</dbReference>
<dbReference type="GeneID" id="3604"/>
<dbReference type="KEGG" id="hsa:3604"/>
<dbReference type="MANE-Select" id="ENST00000377507.8">
    <property type="protein sequence ID" value="ENSP00000366729.3"/>
    <property type="RefSeq nucleotide sequence ID" value="NM_001561.6"/>
    <property type="RefSeq protein sequence ID" value="NP_001552.2"/>
</dbReference>
<dbReference type="UCSC" id="uc001aot.4">
    <property type="organism name" value="human"/>
</dbReference>
<dbReference type="AGR" id="HGNC:11924"/>
<dbReference type="CTD" id="3604"/>
<dbReference type="DisGeNET" id="3604"/>
<dbReference type="GeneCards" id="TNFRSF9"/>
<dbReference type="HGNC" id="HGNC:11924">
    <property type="gene designation" value="TNFRSF9"/>
</dbReference>
<dbReference type="HPA" id="ENSG00000049249">
    <property type="expression patterns" value="Tissue enhanced (lymphoid)"/>
</dbReference>
<dbReference type="MalaCards" id="TNFRSF9"/>
<dbReference type="MIM" id="602250">
    <property type="type" value="gene"/>
</dbReference>
<dbReference type="MIM" id="620282">
    <property type="type" value="phenotype"/>
</dbReference>
<dbReference type="neXtProt" id="NX_Q07011"/>
<dbReference type="OpenTargets" id="ENSG00000049249"/>
<dbReference type="Orphanet" id="664726">
    <property type="disease" value="EBV-induced lymphoproliferative disease due to CD137 deficiency"/>
</dbReference>
<dbReference type="PharmGKB" id="PA36617"/>
<dbReference type="VEuPathDB" id="HostDB:ENSG00000049249"/>
<dbReference type="eggNOG" id="ENOG502S017">
    <property type="taxonomic scope" value="Eukaryota"/>
</dbReference>
<dbReference type="GeneTree" id="ENSGT00730000111279"/>
<dbReference type="HOGENOM" id="CLU_076906_0_0_1"/>
<dbReference type="InParanoid" id="Q07011"/>
<dbReference type="OMA" id="YLFKQPF"/>
<dbReference type="OrthoDB" id="9423210at2759"/>
<dbReference type="PAN-GO" id="Q07011">
    <property type="GO annotations" value="4 GO annotations based on evolutionary models"/>
</dbReference>
<dbReference type="PhylomeDB" id="Q07011"/>
<dbReference type="TreeFam" id="TF336151"/>
<dbReference type="PathwayCommons" id="Q07011"/>
<dbReference type="Reactome" id="R-HSA-5669034">
    <property type="pathway name" value="TNFs bind their physiological receptors"/>
</dbReference>
<dbReference type="SignaLink" id="Q07011"/>
<dbReference type="BioGRID-ORCS" id="3604">
    <property type="hits" value="16 hits in 1155 CRISPR screens"/>
</dbReference>
<dbReference type="GeneWiki" id="CD137"/>
<dbReference type="GenomeRNAi" id="3604"/>
<dbReference type="Pharos" id="Q07011">
    <property type="development level" value="Tbio"/>
</dbReference>
<dbReference type="PRO" id="PR:Q07011"/>
<dbReference type="Proteomes" id="UP000005640">
    <property type="component" value="Chromosome 1"/>
</dbReference>
<dbReference type="RNAct" id="Q07011">
    <property type="molecule type" value="protein"/>
</dbReference>
<dbReference type="Bgee" id="ENSG00000049249">
    <property type="expression patterns" value="Expressed in buccal mucosa cell and 110 other cell types or tissues"/>
</dbReference>
<dbReference type="ExpressionAtlas" id="Q07011">
    <property type="expression patterns" value="baseline and differential"/>
</dbReference>
<dbReference type="GO" id="GO:0009897">
    <property type="term" value="C:external side of plasma membrane"/>
    <property type="evidence" value="ECO:0007669"/>
    <property type="project" value="InterPro"/>
</dbReference>
<dbReference type="GO" id="GO:0005886">
    <property type="term" value="C:plasma membrane"/>
    <property type="evidence" value="ECO:0000304"/>
    <property type="project" value="Reactome"/>
</dbReference>
<dbReference type="GO" id="GO:0038023">
    <property type="term" value="F:signaling receptor activity"/>
    <property type="evidence" value="ECO:0000318"/>
    <property type="project" value="GO_Central"/>
</dbReference>
<dbReference type="GO" id="GO:0006915">
    <property type="term" value="P:apoptotic process"/>
    <property type="evidence" value="ECO:0000304"/>
    <property type="project" value="ProtInc"/>
</dbReference>
<dbReference type="GO" id="GO:0008285">
    <property type="term" value="P:negative regulation of cell population proliferation"/>
    <property type="evidence" value="ECO:0000304"/>
    <property type="project" value="ProtInc"/>
</dbReference>
<dbReference type="GO" id="GO:0042127">
    <property type="term" value="P:regulation of cell population proliferation"/>
    <property type="evidence" value="ECO:0000318"/>
    <property type="project" value="GO_Central"/>
</dbReference>
<dbReference type="GO" id="GO:0033084">
    <property type="term" value="P:regulation of immature T cell proliferation in thymus"/>
    <property type="evidence" value="ECO:0007669"/>
    <property type="project" value="Ensembl"/>
</dbReference>
<dbReference type="CDD" id="cd13410">
    <property type="entry name" value="TNFRSF9"/>
    <property type="match status" value="1"/>
</dbReference>
<dbReference type="FunFam" id="2.10.50.10:FF:000073">
    <property type="entry name" value="TNF receptor superfamily member 9"/>
    <property type="match status" value="1"/>
</dbReference>
<dbReference type="Gene3D" id="2.10.50.10">
    <property type="entry name" value="Tumor Necrosis Factor Receptor, subunit A, domain 2"/>
    <property type="match status" value="2"/>
</dbReference>
<dbReference type="InterPro" id="IPR009030">
    <property type="entry name" value="Growth_fac_rcpt_cys_sf"/>
</dbReference>
<dbReference type="InterPro" id="IPR001368">
    <property type="entry name" value="TNFR/NGFR_Cys_rich_reg"/>
</dbReference>
<dbReference type="InterPro" id="IPR020413">
    <property type="entry name" value="TNFR_9"/>
</dbReference>
<dbReference type="InterPro" id="IPR034020">
    <property type="entry name" value="TNFRSF9_N"/>
</dbReference>
<dbReference type="PANTHER" id="PTHR47139">
    <property type="entry name" value="TUMOR NECROSIS FACTOR RECEPTOR SUPERFAMILY MEMBER 9"/>
    <property type="match status" value="1"/>
</dbReference>
<dbReference type="PANTHER" id="PTHR47139:SF1">
    <property type="entry name" value="TUMOR NECROSIS FACTOR RECEPTOR SUPERFAMILY MEMBER 9"/>
    <property type="match status" value="1"/>
</dbReference>
<dbReference type="Pfam" id="PF00020">
    <property type="entry name" value="TNFR_c6"/>
    <property type="match status" value="1"/>
</dbReference>
<dbReference type="PRINTS" id="PR01924">
    <property type="entry name" value="TNFACTORR9"/>
</dbReference>
<dbReference type="SMART" id="SM00208">
    <property type="entry name" value="TNFR"/>
    <property type="match status" value="2"/>
</dbReference>
<dbReference type="SUPFAM" id="SSF57184">
    <property type="entry name" value="Growth factor receptor domain"/>
    <property type="match status" value="1"/>
</dbReference>
<dbReference type="PROSITE" id="PS00652">
    <property type="entry name" value="TNFR_NGFR_1"/>
    <property type="match status" value="1"/>
</dbReference>
<dbReference type="PROSITE" id="PS50050">
    <property type="entry name" value="TNFR_NGFR_2"/>
    <property type="match status" value="1"/>
</dbReference>
<keyword id="KW-0002">3D-structure</keyword>
<keyword id="KW-1003">Cell membrane</keyword>
<keyword id="KW-0903">Direct protein sequencing</keyword>
<keyword id="KW-1015">Disulfide bond</keyword>
<keyword id="KW-0325">Glycoprotein</keyword>
<keyword id="KW-0472">Membrane</keyword>
<keyword id="KW-1267">Proteomics identification</keyword>
<keyword id="KW-0675">Receptor</keyword>
<keyword id="KW-1185">Reference proteome</keyword>
<keyword id="KW-0677">Repeat</keyword>
<keyword id="KW-0732">Signal</keyword>
<keyword id="KW-0812">Transmembrane</keyword>
<keyword id="KW-1133">Transmembrane helix</keyword>
<accession>Q07011</accession>
<proteinExistence type="evidence at protein level"/>
<evidence type="ECO:0000250" key="1">
    <source>
        <dbReference type="UniProtKB" id="P20334"/>
    </source>
</evidence>
<evidence type="ECO:0000255" key="2"/>
<evidence type="ECO:0000255" key="3">
    <source>
        <dbReference type="PROSITE-ProRule" id="PRU00206"/>
    </source>
</evidence>
<evidence type="ECO:0000256" key="4">
    <source>
        <dbReference type="SAM" id="MobiDB-lite"/>
    </source>
</evidence>
<evidence type="ECO:0000269" key="5">
    <source>
    </source>
</evidence>
<evidence type="ECO:0000269" key="6">
    <source>
    </source>
</evidence>
<evidence type="ECO:0000269" key="7">
    <source>
    </source>
</evidence>
<evidence type="ECO:0000269" key="8">
    <source>
    </source>
</evidence>
<evidence type="ECO:0000269" key="9">
    <source>
    </source>
</evidence>
<evidence type="ECO:0000269" key="10">
    <source>
    </source>
</evidence>
<evidence type="ECO:0000269" key="11">
    <source ref="5"/>
</evidence>
<evidence type="ECO:0000305" key="12">
    <source>
    </source>
</evidence>
<evidence type="ECO:0007829" key="13">
    <source>
        <dbReference type="PDB" id="6A3W"/>
    </source>
</evidence>
<evidence type="ECO:0007829" key="14">
    <source>
        <dbReference type="PDB" id="6MGP"/>
    </source>
</evidence>
<evidence type="ECO:0007829" key="15">
    <source>
        <dbReference type="PDB" id="7YXU"/>
    </source>
</evidence>
<organism>
    <name type="scientific">Homo sapiens</name>
    <name type="common">Human</name>
    <dbReference type="NCBI Taxonomy" id="9606"/>
    <lineage>
        <taxon>Eukaryota</taxon>
        <taxon>Metazoa</taxon>
        <taxon>Chordata</taxon>
        <taxon>Craniata</taxon>
        <taxon>Vertebrata</taxon>
        <taxon>Euteleostomi</taxon>
        <taxon>Mammalia</taxon>
        <taxon>Eutheria</taxon>
        <taxon>Euarchontoglires</taxon>
        <taxon>Primates</taxon>
        <taxon>Haplorrhini</taxon>
        <taxon>Catarrhini</taxon>
        <taxon>Hominidae</taxon>
        <taxon>Homo</taxon>
    </lineage>
</organism>
<reference key="1">
    <citation type="journal article" date="1994" name="Eur. J. Immunol.">
        <title>Molecular and biological characterization of human 4-1BB and its ligand.</title>
        <authorList>
            <person name="Alderson M.R."/>
            <person name="Smith C.A."/>
            <person name="Tough T.W."/>
            <person name="Davis-Smith T."/>
            <person name="Armitage R.J."/>
            <person name="Falk B."/>
            <person name="Roux E."/>
            <person name="Baker E."/>
            <person name="Sutherland G.R."/>
            <person name="Din W.S."/>
            <person name="Goodwin R.G."/>
        </authorList>
    </citation>
    <scope>NUCLEOTIDE SEQUENCE [MRNA]</scope>
    <source>
        <tissue>Blood</tissue>
    </source>
</reference>
<reference key="2">
    <citation type="journal article" date="1993" name="Gene">
        <title>A receptor induced by lymphocyte activation (ILA): a new member of the human nerve-growth-factor/tumor-necrosis-factor receptor family.</title>
        <authorList>
            <person name="Schwarz H."/>
            <person name="Tuckwell J."/>
            <person name="Lotz M."/>
        </authorList>
    </citation>
    <scope>NUCLEOTIDE SEQUENCE [MRNA]</scope>
    <source>
        <tissue>Blood</tissue>
    </source>
</reference>
<reference key="3">
    <citation type="submission" date="1999-03" db="EMBL/GenBank/DDBJ databases">
        <authorList>
            <person name="Schwarz H."/>
        </authorList>
    </citation>
    <scope>SEQUENCE REVISION TO 107</scope>
</reference>
<reference key="4">
    <citation type="journal article" date="1995" name="Immunol. Lett.">
        <title>Characterization of human homologue of 4-1BB and its ligand.</title>
        <authorList>
            <person name="Zhou Z."/>
            <person name="Kim S."/>
            <person name="Hurtado J."/>
            <person name="Lee Z.H."/>
            <person name="Kim K.K."/>
            <person name="Pollok K.E."/>
            <person name="Kwon B.S."/>
        </authorList>
    </citation>
    <scope>NUCLEOTIDE SEQUENCE [MRNA]</scope>
    <source>
        <tissue>Blood</tissue>
    </source>
</reference>
<reference key="5">
    <citation type="submission" date="2003-10" db="EMBL/GenBank/DDBJ databases">
        <authorList>
            <consortium name="NIEHS SNPs program"/>
        </authorList>
    </citation>
    <scope>NUCLEOTIDE SEQUENCE [GENOMIC DNA]</scope>
    <scope>VARIANTS THR-56; ASN-115 AND ASP-176</scope>
</reference>
<reference key="6">
    <citation type="journal article" date="2006" name="Nature">
        <title>The DNA sequence and biological annotation of human chromosome 1.</title>
        <authorList>
            <person name="Gregory S.G."/>
            <person name="Barlow K.F."/>
            <person name="McLay K.E."/>
            <person name="Kaul R."/>
            <person name="Swarbreck D."/>
            <person name="Dunham A."/>
            <person name="Scott C.E."/>
            <person name="Howe K.L."/>
            <person name="Woodfine K."/>
            <person name="Spencer C.C.A."/>
            <person name="Jones M.C."/>
            <person name="Gillson C."/>
            <person name="Searle S."/>
            <person name="Zhou Y."/>
            <person name="Kokocinski F."/>
            <person name="McDonald L."/>
            <person name="Evans R."/>
            <person name="Phillips K."/>
            <person name="Atkinson A."/>
            <person name="Cooper R."/>
            <person name="Jones C."/>
            <person name="Hall R.E."/>
            <person name="Andrews T.D."/>
            <person name="Lloyd C."/>
            <person name="Ainscough R."/>
            <person name="Almeida J.P."/>
            <person name="Ambrose K.D."/>
            <person name="Anderson F."/>
            <person name="Andrew R.W."/>
            <person name="Ashwell R.I.S."/>
            <person name="Aubin K."/>
            <person name="Babbage A.K."/>
            <person name="Bagguley C.L."/>
            <person name="Bailey J."/>
            <person name="Beasley H."/>
            <person name="Bethel G."/>
            <person name="Bird C.P."/>
            <person name="Bray-Allen S."/>
            <person name="Brown J.Y."/>
            <person name="Brown A.J."/>
            <person name="Buckley D."/>
            <person name="Burton J."/>
            <person name="Bye J."/>
            <person name="Carder C."/>
            <person name="Chapman J.C."/>
            <person name="Clark S.Y."/>
            <person name="Clarke G."/>
            <person name="Clee C."/>
            <person name="Cobley V."/>
            <person name="Collier R.E."/>
            <person name="Corby N."/>
            <person name="Coville G.J."/>
            <person name="Davies J."/>
            <person name="Deadman R."/>
            <person name="Dunn M."/>
            <person name="Earthrowl M."/>
            <person name="Ellington A.G."/>
            <person name="Errington H."/>
            <person name="Frankish A."/>
            <person name="Frankland J."/>
            <person name="French L."/>
            <person name="Garner P."/>
            <person name="Garnett J."/>
            <person name="Gay L."/>
            <person name="Ghori M.R.J."/>
            <person name="Gibson R."/>
            <person name="Gilby L.M."/>
            <person name="Gillett W."/>
            <person name="Glithero R.J."/>
            <person name="Grafham D.V."/>
            <person name="Griffiths C."/>
            <person name="Griffiths-Jones S."/>
            <person name="Grocock R."/>
            <person name="Hammond S."/>
            <person name="Harrison E.S.I."/>
            <person name="Hart E."/>
            <person name="Haugen E."/>
            <person name="Heath P.D."/>
            <person name="Holmes S."/>
            <person name="Holt K."/>
            <person name="Howden P.J."/>
            <person name="Hunt A.R."/>
            <person name="Hunt S.E."/>
            <person name="Hunter G."/>
            <person name="Isherwood J."/>
            <person name="James R."/>
            <person name="Johnson C."/>
            <person name="Johnson D."/>
            <person name="Joy A."/>
            <person name="Kay M."/>
            <person name="Kershaw J.K."/>
            <person name="Kibukawa M."/>
            <person name="Kimberley A.M."/>
            <person name="King A."/>
            <person name="Knights A.J."/>
            <person name="Lad H."/>
            <person name="Laird G."/>
            <person name="Lawlor S."/>
            <person name="Leongamornlert D.A."/>
            <person name="Lloyd D.M."/>
            <person name="Loveland J."/>
            <person name="Lovell J."/>
            <person name="Lush M.J."/>
            <person name="Lyne R."/>
            <person name="Martin S."/>
            <person name="Mashreghi-Mohammadi M."/>
            <person name="Matthews L."/>
            <person name="Matthews N.S.W."/>
            <person name="McLaren S."/>
            <person name="Milne S."/>
            <person name="Mistry S."/>
            <person name="Moore M.J.F."/>
            <person name="Nickerson T."/>
            <person name="O'Dell C.N."/>
            <person name="Oliver K."/>
            <person name="Palmeiri A."/>
            <person name="Palmer S.A."/>
            <person name="Parker A."/>
            <person name="Patel D."/>
            <person name="Pearce A.V."/>
            <person name="Peck A.I."/>
            <person name="Pelan S."/>
            <person name="Phelps K."/>
            <person name="Phillimore B.J."/>
            <person name="Plumb R."/>
            <person name="Rajan J."/>
            <person name="Raymond C."/>
            <person name="Rouse G."/>
            <person name="Saenphimmachak C."/>
            <person name="Sehra H.K."/>
            <person name="Sheridan E."/>
            <person name="Shownkeen R."/>
            <person name="Sims S."/>
            <person name="Skuce C.D."/>
            <person name="Smith M."/>
            <person name="Steward C."/>
            <person name="Subramanian S."/>
            <person name="Sycamore N."/>
            <person name="Tracey A."/>
            <person name="Tromans A."/>
            <person name="Van Helmond Z."/>
            <person name="Wall M."/>
            <person name="Wallis J.M."/>
            <person name="White S."/>
            <person name="Whitehead S.L."/>
            <person name="Wilkinson J.E."/>
            <person name="Willey D.L."/>
            <person name="Williams H."/>
            <person name="Wilming L."/>
            <person name="Wray P.W."/>
            <person name="Wu Z."/>
            <person name="Coulson A."/>
            <person name="Vaudin M."/>
            <person name="Sulston J.E."/>
            <person name="Durbin R.M."/>
            <person name="Hubbard T."/>
            <person name="Wooster R."/>
            <person name="Dunham I."/>
            <person name="Carter N.P."/>
            <person name="McVean G."/>
            <person name="Ross M.T."/>
            <person name="Harrow J."/>
            <person name="Olson M.V."/>
            <person name="Beck S."/>
            <person name="Rogers J."/>
            <person name="Bentley D.R."/>
        </authorList>
    </citation>
    <scope>NUCLEOTIDE SEQUENCE [LARGE SCALE GENOMIC DNA]</scope>
</reference>
<reference key="7">
    <citation type="journal article" date="2004" name="Genome Res.">
        <title>The status, quality, and expansion of the NIH full-length cDNA project: the Mammalian Gene Collection (MGC).</title>
        <authorList>
            <consortium name="The MGC Project Team"/>
        </authorList>
    </citation>
    <scope>NUCLEOTIDE SEQUENCE [LARGE SCALE MRNA]</scope>
    <source>
        <tissue>Kidney</tissue>
    </source>
</reference>
<reference key="8">
    <citation type="journal article" date="2004" name="Protein Sci.">
        <title>Signal peptide prediction based on analysis of experimentally verified cleavage sites.</title>
        <authorList>
            <person name="Zhang Z."/>
            <person name="Henzel W.J."/>
        </authorList>
    </citation>
    <scope>PROTEIN SEQUENCE OF 24-38</scope>
</reference>
<reference key="9">
    <citation type="journal article" date="1998" name="Mol. Cell. Biol.">
        <title>4-1BB and Ox40 are members of a tumor necrosis factor (TNF)-nerve growth factor receptor subfamily that bind TNF receptor-associated factors and activate nuclear factor kappaB.</title>
        <authorList>
            <person name="Arch R.H."/>
            <person name="Thompson C.B."/>
        </authorList>
    </citation>
    <scope>INTERACTION WITH TRAF1; TRAF2 AND TRAF3</scope>
</reference>
<reference key="10">
    <citation type="journal article" date="1998" name="J. Exp. Med.">
        <title>CD28-independent, TRAF2-dependent costimulation of resting T cells by 4-1BB ligand.</title>
        <authorList>
            <person name="Saoulli K."/>
            <person name="Lee S.Y."/>
            <person name="Cannons J.L."/>
            <person name="Yeh W.C."/>
            <person name="Santana A."/>
            <person name="Goldstein M.D."/>
            <person name="Bangia N."/>
            <person name="DeBenedette M.A."/>
            <person name="Mak T.W."/>
            <person name="Choi Y."/>
            <person name="Watts T.H."/>
        </authorList>
    </citation>
    <scope>INTERACTION WITH TRAF1 AND TRAF2</scope>
</reference>
<reference key="11">
    <citation type="journal article" date="2001" name="Mol. Cells">
        <title>A novel leucine-rich repeat protein (LRR-1): potential involvement in 4-1BB-mediated signal transduction.</title>
        <authorList>
            <person name="Jang I.-K."/>
            <person name="Lee Z.-H."/>
            <person name="Kim H.-H."/>
            <person name="Hill J.M."/>
            <person name="Kim J.-D."/>
            <person name="Kwon B.S."/>
        </authorList>
    </citation>
    <scope>INTERACTION WITH LRR-REPEAT PROTEIN 1/LRR-1</scope>
</reference>
<reference key="12">
    <citation type="journal article" date="2006" name="Science">
        <title>The consensus coding sequences of human breast and colorectal cancers.</title>
        <authorList>
            <person name="Sjoeblom T."/>
            <person name="Jones S."/>
            <person name="Wood L.D."/>
            <person name="Parsons D.W."/>
            <person name="Lin J."/>
            <person name="Barber T.D."/>
            <person name="Mandelker D."/>
            <person name="Leary R.J."/>
            <person name="Ptak J."/>
            <person name="Silliman N."/>
            <person name="Szabo S."/>
            <person name="Buckhaults P."/>
            <person name="Farrell C."/>
            <person name="Meeh P."/>
            <person name="Markowitz S.D."/>
            <person name="Willis J."/>
            <person name="Dawson D."/>
            <person name="Willson J.K.V."/>
            <person name="Gazdar A.F."/>
            <person name="Hartigan J."/>
            <person name="Wu L."/>
            <person name="Liu C."/>
            <person name="Parmigiani G."/>
            <person name="Park B.H."/>
            <person name="Bachman K.E."/>
            <person name="Papadopoulos N."/>
            <person name="Vogelstein B."/>
            <person name="Kinzler K.W."/>
            <person name="Velculescu V.E."/>
        </authorList>
    </citation>
    <scope>VARIANT [LARGE SCALE ANALYSIS] GLY-250</scope>
</reference>
<reference key="13">
    <citation type="journal article" date="2019" name="J. Allergy Clin. Immunol.">
        <title>Immunodeficiency and EBV-induced lymphoproliferation caused by 4-1BB deficiency.</title>
        <authorList>
            <person name="Alosaimi M.F."/>
            <person name="Hoenig M."/>
            <person name="Jaber F."/>
            <person name="Platt C.D."/>
            <person name="Jones J."/>
            <person name="Wallace J."/>
            <person name="Debatin K.M."/>
            <person name="Schulz A."/>
            <person name="Jacobsen E."/>
            <person name="Moeller P."/>
            <person name="Shamseldin H.E."/>
            <person name="Abdulwahab F."/>
            <person name="Ibrahim N."/>
            <person name="Alardati H."/>
            <person name="Almuhizi F."/>
            <person name="Abosoudah I.F."/>
            <person name="Basha T.A."/>
            <person name="Chou J."/>
            <person name="Alkuraya F.S."/>
            <person name="Geha R.S."/>
        </authorList>
    </citation>
    <scope>INVOLVEMENT IN IMD109</scope>
    <scope>VARIANT IMD109 SER-109</scope>
    <scope>CHARACTERIZATION OF VARIANT IMD109 SER-109</scope>
    <scope>FUNCTION</scope>
    <scope>TISSUE SPECIFICITY</scope>
</reference>
<comment type="function">
    <text evidence="12">Receptor for TNFSF9/4-1BBL. Conveys a signal that enhances CD8(+) T-cell survival, cytotoxicity, and mitochondrial activity, thereby promoting immunity against viruses and tumors (Probable).</text>
</comment>
<comment type="subunit">
    <text evidence="1 5 9 10">Predominantly homodimeric, but may also exist as a monomer (By similarity). Interacts with TRAF1, TRAF2 and TRAF3 (PubMed:9418902, PubMed:9607925). Interacts with LRR-repeat protein 1/LRR-1 (PubMed:11804328).</text>
</comment>
<comment type="interaction">
    <interactant intactId="EBI-12945620">
        <id>Q07011</id>
    </interactant>
    <interactant intactId="EBI-10329948">
        <id>Q9Y6X1</id>
        <label>SERP1</label>
    </interactant>
    <organismsDiffer>false</organismsDiffer>
    <experiments>3</experiments>
</comment>
<comment type="subcellular location">
    <subcellularLocation>
        <location>Cell membrane</location>
        <topology evidence="12">Single-pass type I membrane protein</topology>
    </subcellularLocation>
</comment>
<comment type="tissue specificity">
    <text evidence="8">Expressed on the surface of activated T-cells.</text>
</comment>
<comment type="disease" evidence="8">
    <disease id="DI-06628">
        <name>Immunodeficiency 109 with lymphoproliferation</name>
        <acronym>IMD109</acronym>
        <description>An autosomal recessive primary immune disorder characterized by recurrent sinopulmonary infections, susceptibility to infection with Epstein-Barr virus (EBV), persistent EBV viremia, and EBV-induced lymphoproliferation or B-cell lymphoma.</description>
        <dbReference type="MIM" id="620282"/>
    </disease>
    <text>The disease may be caused by variants affecting the gene represented in this entry.</text>
</comment>
<name>TNR9_HUMAN</name>
<protein>
    <recommendedName>
        <fullName>Tumor necrosis factor receptor superfamily member 9</fullName>
    </recommendedName>
    <alternativeName>
        <fullName>4-1BB ligand receptor</fullName>
    </alternativeName>
    <alternativeName>
        <fullName>CDw137</fullName>
    </alternativeName>
    <alternativeName>
        <fullName>T-cell antigen 4-1BB homolog</fullName>
    </alternativeName>
    <alternativeName>
        <fullName>T-cell antigen ILA</fullName>
    </alternativeName>
    <cdAntigenName>CD137</cdAntigenName>
</protein>
<feature type="signal peptide" evidence="6">
    <location>
        <begin position="1"/>
        <end position="23"/>
    </location>
</feature>
<feature type="chain" id="PRO_0000034577" description="Tumor necrosis factor receptor superfamily member 9">
    <location>
        <begin position="24"/>
        <end position="255"/>
    </location>
</feature>
<feature type="topological domain" description="Extracellular" evidence="2">
    <location>
        <begin position="24"/>
        <end position="186"/>
    </location>
</feature>
<feature type="transmembrane region" description="Helical" evidence="2">
    <location>
        <begin position="187"/>
        <end position="213"/>
    </location>
</feature>
<feature type="topological domain" description="Cytoplasmic" evidence="2">
    <location>
        <begin position="214"/>
        <end position="255"/>
    </location>
</feature>
<feature type="repeat" description="TNFR-Cys 1">
    <location>
        <begin position="24"/>
        <end position="45"/>
    </location>
</feature>
<feature type="repeat" description="TNFR-Cys 2">
    <location>
        <begin position="47"/>
        <end position="86"/>
    </location>
</feature>
<feature type="repeat" description="TNFR-Cys 3">
    <location>
        <begin position="87"/>
        <end position="118"/>
    </location>
</feature>
<feature type="repeat" description="TNFR-Cys 4">
    <location>
        <begin position="119"/>
        <end position="159"/>
    </location>
</feature>
<feature type="region of interest" description="Disordered" evidence="4">
    <location>
        <begin position="161"/>
        <end position="180"/>
    </location>
</feature>
<feature type="region of interest" description="Interaction with LRR-1">
    <location>
        <begin position="214"/>
        <end position="255"/>
    </location>
</feature>
<feature type="glycosylation site" description="N-linked (GlcNAc...) asparagine" evidence="2">
    <location>
        <position position="138"/>
    </location>
</feature>
<feature type="glycosylation site" description="N-linked (GlcNAc...) asparagine" evidence="2">
    <location>
        <position position="149"/>
    </location>
</feature>
<feature type="disulfide bond" evidence="3">
    <location>
        <begin position="28"/>
        <end position="37"/>
    </location>
</feature>
<feature type="disulfide bond" evidence="3">
    <location>
        <begin position="31"/>
        <end position="45"/>
    </location>
</feature>
<feature type="disulfide bond" evidence="3">
    <location>
        <begin position="48"/>
        <end position="62"/>
    </location>
</feature>
<feature type="disulfide bond" evidence="3">
    <location>
        <begin position="65"/>
        <end position="78"/>
    </location>
</feature>
<feature type="disulfide bond" evidence="3">
    <location>
        <begin position="68"/>
        <end position="86"/>
    </location>
</feature>
<feature type="disulfide bond" evidence="3">
    <location>
        <begin position="88"/>
        <end position="94"/>
    </location>
</feature>
<feature type="disulfide bond" evidence="3">
    <location>
        <begin position="99"/>
        <end position="106"/>
    </location>
</feature>
<feature type="disulfide bond" evidence="3">
    <location>
        <begin position="102"/>
        <end position="117"/>
    </location>
</feature>
<feature type="disulfide bond" evidence="3">
    <location>
        <begin position="121"/>
        <end position="133"/>
    </location>
</feature>
<feature type="disulfide bond" evidence="3">
    <location>
        <begin position="139"/>
        <end position="158"/>
    </location>
</feature>
<feature type="sequence variant" id="VAR_018920" description="In dbSNP:rs9657963." evidence="11">
    <original>A</original>
    <variation>T</variation>
    <location>
        <position position="56"/>
    </location>
</feature>
<feature type="sequence variant" id="VAR_088225" description="In IMD109; uncertain significance; contrary to wild-type, undetectable in patient's stimulated peripheral blood mononuclear cells; patient's cells show defective expansion, reduced expression of IFNG and perforin/PRF1 and impaired allospecific and EBV-specific cytotoxic activity, as well as reduced mitochondrial function." evidence="8">
    <original>G</original>
    <variation>S</variation>
    <location>
        <position position="109"/>
    </location>
</feature>
<feature type="sequence variant" id="VAR_018921" description="In dbSNP:rs9657965." evidence="11">
    <original>K</original>
    <variation>N</variation>
    <location>
        <position position="115"/>
    </location>
</feature>
<feature type="sequence variant" id="VAR_018922" description="In dbSNP:rs9657979." evidence="11">
    <original>A</original>
    <variation>D</variation>
    <location>
        <position position="176"/>
    </location>
</feature>
<feature type="sequence variant" id="VAR_035478" description="In a colorectal cancer sample; somatic mutation; dbSNP:rs776878260." evidence="7">
    <original>E</original>
    <variation>G</variation>
    <location>
        <position position="250"/>
    </location>
</feature>
<feature type="helix" evidence="13">
    <location>
        <begin position="27"/>
        <end position="30"/>
    </location>
</feature>
<feature type="strand" evidence="13">
    <location>
        <begin position="35"/>
        <end position="37"/>
    </location>
</feature>
<feature type="turn" evidence="13">
    <location>
        <begin position="39"/>
        <end position="42"/>
    </location>
</feature>
<feature type="strand" evidence="13">
    <location>
        <begin position="45"/>
        <end position="47"/>
    </location>
</feature>
<feature type="strand" evidence="15">
    <location>
        <begin position="55"/>
        <end position="58"/>
    </location>
</feature>
<feature type="strand" evidence="14">
    <location>
        <begin position="60"/>
        <end position="64"/>
    </location>
</feature>
<feature type="strand" evidence="13">
    <location>
        <begin position="72"/>
        <end position="76"/>
    </location>
</feature>
<feature type="strand" evidence="14">
    <location>
        <begin position="80"/>
        <end position="82"/>
    </location>
</feature>
<feature type="strand" evidence="13">
    <location>
        <begin position="85"/>
        <end position="88"/>
    </location>
</feature>
<feature type="strand" evidence="13">
    <location>
        <begin position="92"/>
        <end position="96"/>
    </location>
</feature>
<feature type="helix" evidence="14">
    <location>
        <begin position="97"/>
        <end position="99"/>
    </location>
</feature>
<feature type="strand" evidence="13">
    <location>
        <begin position="101"/>
        <end position="104"/>
    </location>
</feature>
<feature type="strand" evidence="13">
    <location>
        <begin position="110"/>
        <end position="113"/>
    </location>
</feature>
<feature type="strand" evidence="13">
    <location>
        <begin position="116"/>
        <end position="119"/>
    </location>
</feature>
<feature type="strand" evidence="13">
    <location>
        <begin position="128"/>
        <end position="131"/>
    </location>
</feature>
<feature type="helix" evidence="13">
    <location>
        <begin position="139"/>
        <end position="142"/>
    </location>
</feature>
<feature type="strand" evidence="13">
    <location>
        <begin position="145"/>
        <end position="148"/>
    </location>
</feature>
<feature type="strand" evidence="13">
    <location>
        <begin position="152"/>
        <end position="154"/>
    </location>
</feature>
<feature type="strand" evidence="13">
    <location>
        <begin position="157"/>
        <end position="159"/>
    </location>
</feature>
<gene>
    <name type="primary">TNFRSF9</name>
    <name type="synonym">CD137</name>
    <name type="synonym">ILA</name>
</gene>